<feature type="chain" id="PRO_0000179593" description="ATP-dependent Clp protease proteolytic subunit 2">
    <location>
        <begin position="1"/>
        <end position="214"/>
    </location>
</feature>
<feature type="active site" description="Nucleophile" evidence="1">
    <location>
        <position position="110"/>
    </location>
</feature>
<feature type="active site" evidence="1">
    <location>
        <position position="135"/>
    </location>
</feature>
<evidence type="ECO:0000255" key="1">
    <source>
        <dbReference type="HAMAP-Rule" id="MF_00444"/>
    </source>
</evidence>
<accession>Q9CBY4</accession>
<dbReference type="EC" id="3.4.21.92" evidence="1"/>
<dbReference type="EMBL" id="AL583922">
    <property type="protein sequence ID" value="CAC30429.1"/>
    <property type="molecule type" value="Genomic_DNA"/>
</dbReference>
<dbReference type="PIR" id="H87093">
    <property type="entry name" value="H87093"/>
</dbReference>
<dbReference type="RefSeq" id="NP_302040.1">
    <property type="nucleotide sequence ID" value="NC_002677.1"/>
</dbReference>
<dbReference type="RefSeq" id="WP_010908361.1">
    <property type="nucleotide sequence ID" value="NC_002677.1"/>
</dbReference>
<dbReference type="SMR" id="Q9CBY4"/>
<dbReference type="STRING" id="272631.gene:17575317"/>
<dbReference type="MEROPS" id="S14.009"/>
<dbReference type="KEGG" id="mle:ML1479"/>
<dbReference type="PATRIC" id="fig|272631.5.peg.2771"/>
<dbReference type="Leproma" id="ML1479"/>
<dbReference type="eggNOG" id="COG0740">
    <property type="taxonomic scope" value="Bacteria"/>
</dbReference>
<dbReference type="HOGENOM" id="CLU_058707_3_2_11"/>
<dbReference type="OrthoDB" id="9802800at2"/>
<dbReference type="Proteomes" id="UP000000806">
    <property type="component" value="Chromosome"/>
</dbReference>
<dbReference type="GO" id="GO:0005737">
    <property type="term" value="C:cytoplasm"/>
    <property type="evidence" value="ECO:0007669"/>
    <property type="project" value="UniProtKB-SubCell"/>
</dbReference>
<dbReference type="GO" id="GO:0009368">
    <property type="term" value="C:endopeptidase Clp complex"/>
    <property type="evidence" value="ECO:0007669"/>
    <property type="project" value="TreeGrafter"/>
</dbReference>
<dbReference type="GO" id="GO:0004176">
    <property type="term" value="F:ATP-dependent peptidase activity"/>
    <property type="evidence" value="ECO:0007669"/>
    <property type="project" value="InterPro"/>
</dbReference>
<dbReference type="GO" id="GO:0051117">
    <property type="term" value="F:ATPase binding"/>
    <property type="evidence" value="ECO:0007669"/>
    <property type="project" value="TreeGrafter"/>
</dbReference>
<dbReference type="GO" id="GO:0004252">
    <property type="term" value="F:serine-type endopeptidase activity"/>
    <property type="evidence" value="ECO:0007669"/>
    <property type="project" value="UniProtKB-UniRule"/>
</dbReference>
<dbReference type="GO" id="GO:0006515">
    <property type="term" value="P:protein quality control for misfolded or incompletely synthesized proteins"/>
    <property type="evidence" value="ECO:0007669"/>
    <property type="project" value="TreeGrafter"/>
</dbReference>
<dbReference type="CDD" id="cd07017">
    <property type="entry name" value="S14_ClpP_2"/>
    <property type="match status" value="1"/>
</dbReference>
<dbReference type="FunFam" id="3.90.226.10:FF:000002">
    <property type="entry name" value="ATP-dependent Clp protease proteolytic subunit"/>
    <property type="match status" value="1"/>
</dbReference>
<dbReference type="Gene3D" id="3.90.226.10">
    <property type="entry name" value="2-enoyl-CoA Hydratase, Chain A, domain 1"/>
    <property type="match status" value="1"/>
</dbReference>
<dbReference type="HAMAP" id="MF_00444">
    <property type="entry name" value="ClpP"/>
    <property type="match status" value="1"/>
</dbReference>
<dbReference type="InterPro" id="IPR001907">
    <property type="entry name" value="ClpP"/>
</dbReference>
<dbReference type="InterPro" id="IPR029045">
    <property type="entry name" value="ClpP/crotonase-like_dom_sf"/>
</dbReference>
<dbReference type="InterPro" id="IPR023562">
    <property type="entry name" value="ClpP/TepA"/>
</dbReference>
<dbReference type="InterPro" id="IPR033135">
    <property type="entry name" value="ClpP_His_AS"/>
</dbReference>
<dbReference type="InterPro" id="IPR018215">
    <property type="entry name" value="ClpP_Ser_AS"/>
</dbReference>
<dbReference type="NCBIfam" id="NF001368">
    <property type="entry name" value="PRK00277.1"/>
    <property type="match status" value="1"/>
</dbReference>
<dbReference type="NCBIfam" id="NF009205">
    <property type="entry name" value="PRK12553.1"/>
    <property type="match status" value="1"/>
</dbReference>
<dbReference type="PANTHER" id="PTHR10381">
    <property type="entry name" value="ATP-DEPENDENT CLP PROTEASE PROTEOLYTIC SUBUNIT"/>
    <property type="match status" value="1"/>
</dbReference>
<dbReference type="PANTHER" id="PTHR10381:SF26">
    <property type="entry name" value="ATP-DEPENDENT CLP PROTEASE PROTEOLYTIC SUBUNIT-LIKE-RELATED"/>
    <property type="match status" value="1"/>
</dbReference>
<dbReference type="Pfam" id="PF00574">
    <property type="entry name" value="CLP_protease"/>
    <property type="match status" value="1"/>
</dbReference>
<dbReference type="PRINTS" id="PR00127">
    <property type="entry name" value="CLPPROTEASEP"/>
</dbReference>
<dbReference type="SUPFAM" id="SSF52096">
    <property type="entry name" value="ClpP/crotonase"/>
    <property type="match status" value="1"/>
</dbReference>
<dbReference type="PROSITE" id="PS00382">
    <property type="entry name" value="CLP_PROTEASE_HIS"/>
    <property type="match status" value="1"/>
</dbReference>
<dbReference type="PROSITE" id="PS00381">
    <property type="entry name" value="CLP_PROTEASE_SER"/>
    <property type="match status" value="1"/>
</dbReference>
<comment type="function">
    <text evidence="1">Cleaves peptides in various proteins in a process that requires ATP hydrolysis. Has a chymotrypsin-like activity. Plays a major role in the degradation of misfolded proteins.</text>
</comment>
<comment type="catalytic activity">
    <reaction evidence="1">
        <text>Hydrolysis of proteins to small peptides in the presence of ATP and magnesium. alpha-casein is the usual test substrate. In the absence of ATP, only oligopeptides shorter than five residues are hydrolyzed (such as succinyl-Leu-Tyr-|-NHMec, and Leu-Tyr-Leu-|-Tyr-Trp, in which cleavage of the -Tyr-|-Leu- and -Tyr-|-Trp bonds also occurs).</text>
        <dbReference type="EC" id="3.4.21.92"/>
    </reaction>
</comment>
<comment type="subunit">
    <text evidence="1">Fourteen ClpP subunits assemble into 2 heptameric rings which stack back to back to give a disk-like structure with a central cavity, resembling the structure of eukaryotic proteasomes.</text>
</comment>
<comment type="subcellular location">
    <subcellularLocation>
        <location evidence="1">Cytoplasm</location>
    </subcellularLocation>
</comment>
<comment type="similarity">
    <text evidence="1">Belongs to the peptidase S14 family.</text>
</comment>
<protein>
    <recommendedName>
        <fullName evidence="1">ATP-dependent Clp protease proteolytic subunit 2</fullName>
        <ecNumber evidence="1">3.4.21.92</ecNumber>
    </recommendedName>
    <alternativeName>
        <fullName evidence="1">Endopeptidase Clp 2</fullName>
    </alternativeName>
</protein>
<proteinExistence type="inferred from homology"/>
<name>CLPP2_MYCLE</name>
<keyword id="KW-0963">Cytoplasm</keyword>
<keyword id="KW-0378">Hydrolase</keyword>
<keyword id="KW-0645">Protease</keyword>
<keyword id="KW-1185">Reference proteome</keyword>
<keyword id="KW-0720">Serine protease</keyword>
<reference key="1">
    <citation type="journal article" date="2001" name="Nature">
        <title>Massive gene decay in the leprosy bacillus.</title>
        <authorList>
            <person name="Cole S.T."/>
            <person name="Eiglmeier K."/>
            <person name="Parkhill J."/>
            <person name="James K.D."/>
            <person name="Thomson N.R."/>
            <person name="Wheeler P.R."/>
            <person name="Honore N."/>
            <person name="Garnier T."/>
            <person name="Churcher C.M."/>
            <person name="Harris D.E."/>
            <person name="Mungall K.L."/>
            <person name="Basham D."/>
            <person name="Brown D."/>
            <person name="Chillingworth T."/>
            <person name="Connor R."/>
            <person name="Davies R.M."/>
            <person name="Devlin K."/>
            <person name="Duthoy S."/>
            <person name="Feltwell T."/>
            <person name="Fraser A."/>
            <person name="Hamlin N."/>
            <person name="Holroyd S."/>
            <person name="Hornsby T."/>
            <person name="Jagels K."/>
            <person name="Lacroix C."/>
            <person name="Maclean J."/>
            <person name="Moule S."/>
            <person name="Murphy L.D."/>
            <person name="Oliver K."/>
            <person name="Quail M.A."/>
            <person name="Rajandream M.A."/>
            <person name="Rutherford K.M."/>
            <person name="Rutter S."/>
            <person name="Seeger K."/>
            <person name="Simon S."/>
            <person name="Simmonds M."/>
            <person name="Skelton J."/>
            <person name="Squares R."/>
            <person name="Squares S."/>
            <person name="Stevens K."/>
            <person name="Taylor K."/>
            <person name="Whitehead S."/>
            <person name="Woodward J.R."/>
            <person name="Barrell B.G."/>
        </authorList>
    </citation>
    <scope>NUCLEOTIDE SEQUENCE [LARGE SCALE GENOMIC DNA]</scope>
    <source>
        <strain>TN</strain>
    </source>
</reference>
<gene>
    <name evidence="1" type="primary">clpP2</name>
    <name type="ordered locus">ML1479</name>
</gene>
<organism>
    <name type="scientific">Mycobacterium leprae (strain TN)</name>
    <dbReference type="NCBI Taxonomy" id="272631"/>
    <lineage>
        <taxon>Bacteria</taxon>
        <taxon>Bacillati</taxon>
        <taxon>Actinomycetota</taxon>
        <taxon>Actinomycetes</taxon>
        <taxon>Mycobacteriales</taxon>
        <taxon>Mycobacteriaceae</taxon>
        <taxon>Mycobacterium</taxon>
    </lineage>
</organism>
<sequence length="214" mass="23622">MKLQNSQLQPQARYILPSFIEHSSFGVKESNPYNKLFEERIIFLGVQVDDASANDIMAQLLVLESLDPDRDITMYINSPGGGFTSLMAIYDTMQYVRADIQTVCLGQAASAAAVLLAAGTPGKRMALPNARVLIHQPSLAGVIQGQFSDLEIQAAEIERMRTLMETTLSRHTGKDAAVIRKDTDRDKILTAEEAKDYGIIDTVLEYRKLSAQTV</sequence>